<sequence>DVCDSLVGGRCIHNGCYCERSAPNGNCCDTAGCTVLWWCPGTKFD</sequence>
<comment type="function">
    <text evidence="1">Mu-conotoxins block voltage-gated sodium channels. This toxin reversibly blocks voltage-gated sodium channel in cephalopods, with no alteration in the voltage dependence of sodium conductance or on the kinetics of inactivation (By similarity).</text>
</comment>
<comment type="subcellular location">
    <subcellularLocation>
        <location evidence="1">Secreted</location>
    </subcellularLocation>
</comment>
<comment type="tissue specificity">
    <text>Expressed by the venom duct.</text>
</comment>
<comment type="domain">
    <text>The cysteine framework is XII (C-C-C-C-CC-C-C).</text>
</comment>
<keyword id="KW-0102">Bromination</keyword>
<keyword id="KW-1015">Disulfide bond</keyword>
<keyword id="KW-0379">Hydroxylation</keyword>
<keyword id="KW-0872">Ion channel impairing toxin</keyword>
<keyword id="KW-0528">Neurotoxin</keyword>
<keyword id="KW-0964">Secreted</keyword>
<keyword id="KW-0800">Toxin</keyword>
<organism>
    <name type="scientific">Californiconus californicus</name>
    <name type="common">California cone</name>
    <name type="synonym">Conus californicus</name>
    <dbReference type="NCBI Taxonomy" id="1736779"/>
    <lineage>
        <taxon>Eukaryota</taxon>
        <taxon>Metazoa</taxon>
        <taxon>Spiralia</taxon>
        <taxon>Lophotrochozoa</taxon>
        <taxon>Mollusca</taxon>
        <taxon>Gastropoda</taxon>
        <taxon>Caenogastropoda</taxon>
        <taxon>Neogastropoda</taxon>
        <taxon>Conoidea</taxon>
        <taxon>Conidae</taxon>
        <taxon>Californiconus</taxon>
    </lineage>
</organism>
<dbReference type="EMBL" id="EF644190">
    <property type="protein sequence ID" value="ABR92960.1"/>
    <property type="molecule type" value="mRNA"/>
</dbReference>
<dbReference type="ConoServer" id="809">
    <property type="toxin name" value="Cal12.1.2g"/>
</dbReference>
<dbReference type="GO" id="GO:0005576">
    <property type="term" value="C:extracellular region"/>
    <property type="evidence" value="ECO:0007669"/>
    <property type="project" value="UniProtKB-SubCell"/>
</dbReference>
<dbReference type="GO" id="GO:0099106">
    <property type="term" value="F:ion channel regulator activity"/>
    <property type="evidence" value="ECO:0007669"/>
    <property type="project" value="UniProtKB-KW"/>
</dbReference>
<dbReference type="GO" id="GO:0090729">
    <property type="term" value="F:toxin activity"/>
    <property type="evidence" value="ECO:0007669"/>
    <property type="project" value="UniProtKB-KW"/>
</dbReference>
<evidence type="ECO:0000250" key="1"/>
<evidence type="ECO:0000305" key="2"/>
<accession>A6YR36</accession>
<reference key="1">
    <citation type="journal article" date="2011" name="J. Exp. Biol.">
        <title>A diverse family of novel peptide toxins from an unusual cone snail, Conus californicus.</title>
        <authorList>
            <person name="Gilly W.F."/>
            <person name="Richmond T.A."/>
            <person name="Duda T.F. Jr."/>
            <person name="Elliger C."/>
            <person name="Lebaric Z."/>
            <person name="Schulz J."/>
            <person name="Bingham J.P."/>
            <person name="Sweedler J.V."/>
        </authorList>
    </citation>
    <scope>NUCLEOTIDE SEQUENCE [MRNA]</scope>
    <source>
        <tissue>Venom duct</tissue>
    </source>
</reference>
<proteinExistence type="evidence at transcript level"/>
<protein>
    <recommendedName>
        <fullName>Mu-conotoxin-like Cal 12.1.2g</fullName>
    </recommendedName>
    <alternativeName>
        <fullName>Conotoxin CalTx 12.1.3F</fullName>
    </alternativeName>
</protein>
<feature type="peptide" id="PRO_0000392275" description="Mu-conotoxin-like Cal 12.1.2g">
    <location>
        <begin position="1"/>
        <end position="45"/>
    </location>
</feature>
<feature type="modified residue" description="4-hydroxyproline" evidence="1">
    <location>
        <position position="23"/>
    </location>
</feature>
<feature type="modified residue" description="6'-bromotryptophan" evidence="1">
    <location>
        <position position="37"/>
    </location>
</feature>
<feature type="modified residue" description="6'-bromotryptophan" evidence="1">
    <location>
        <position position="38"/>
    </location>
</feature>
<feature type="modified residue" description="4-hydroxyproline" evidence="1">
    <location>
        <position position="40"/>
    </location>
</feature>
<feature type="disulfide bond" evidence="2">
    <location>
        <begin position="3"/>
        <end position="16"/>
    </location>
</feature>
<feature type="disulfide bond" evidence="1">
    <location>
        <begin position="11"/>
        <end position="28"/>
    </location>
</feature>
<feature type="disulfide bond" evidence="1">
    <location>
        <begin position="18"/>
        <end position="33"/>
    </location>
</feature>
<feature type="disulfide bond" evidence="1">
    <location>
        <begin position="27"/>
        <end position="39"/>
    </location>
</feature>
<name>COC2G_CONCL</name>